<organism>
    <name type="scientific">Mus musculus</name>
    <name type="common">Mouse</name>
    <dbReference type="NCBI Taxonomy" id="10090"/>
    <lineage>
        <taxon>Eukaryota</taxon>
        <taxon>Metazoa</taxon>
        <taxon>Chordata</taxon>
        <taxon>Craniata</taxon>
        <taxon>Vertebrata</taxon>
        <taxon>Euteleostomi</taxon>
        <taxon>Mammalia</taxon>
        <taxon>Eutheria</taxon>
        <taxon>Euarchontoglires</taxon>
        <taxon>Glires</taxon>
        <taxon>Rodentia</taxon>
        <taxon>Myomorpha</taxon>
        <taxon>Muroidea</taxon>
        <taxon>Muridae</taxon>
        <taxon>Murinae</taxon>
        <taxon>Mus</taxon>
        <taxon>Mus</taxon>
    </lineage>
</organism>
<name>VWA2_MOUSE</name>
<dbReference type="EMBL" id="AJ536329">
    <property type="protein sequence ID" value="CAD60277.1"/>
    <property type="molecule type" value="mRNA"/>
</dbReference>
<dbReference type="EMBL" id="AK133486">
    <property type="protein sequence ID" value="BAE21683.1"/>
    <property type="molecule type" value="mRNA"/>
</dbReference>
<dbReference type="EMBL" id="AK145058">
    <property type="protein sequence ID" value="BAE26210.1"/>
    <property type="molecule type" value="mRNA"/>
</dbReference>
<dbReference type="EMBL" id="BC115868">
    <property type="protein sequence ID" value="AAI15869.1"/>
    <property type="molecule type" value="mRNA"/>
</dbReference>
<dbReference type="EMBL" id="BC116636">
    <property type="protein sequence ID" value="AAI16637.1"/>
    <property type="molecule type" value="mRNA"/>
</dbReference>
<dbReference type="CCDS" id="CCDS29923.1">
    <molecule id="Q70UZ7-1"/>
</dbReference>
<dbReference type="RefSeq" id="NP_766428.2">
    <molecule id="Q70UZ7-1"/>
    <property type="nucleotide sequence ID" value="NM_172840.2"/>
</dbReference>
<dbReference type="SMR" id="Q70UZ7"/>
<dbReference type="FunCoup" id="Q70UZ7">
    <property type="interactions" value="150"/>
</dbReference>
<dbReference type="STRING" id="10090.ENSMUSP00000026068"/>
<dbReference type="GlyCosmos" id="Q70UZ7">
    <property type="glycosylation" value="1 site, No reported glycans"/>
</dbReference>
<dbReference type="GlyGen" id="Q70UZ7">
    <property type="glycosylation" value="2 sites"/>
</dbReference>
<dbReference type="PhosphoSitePlus" id="Q70UZ7"/>
<dbReference type="jPOST" id="Q70UZ7"/>
<dbReference type="PaxDb" id="10090-ENSMUSP00000026068"/>
<dbReference type="ProteomicsDB" id="297618">
    <molecule id="Q70UZ7-1"/>
</dbReference>
<dbReference type="Antibodypedia" id="46200">
    <property type="antibodies" value="103 antibodies from 21 providers"/>
</dbReference>
<dbReference type="DNASU" id="240675"/>
<dbReference type="Ensembl" id="ENSMUST00000026068.8">
    <molecule id="Q70UZ7-1"/>
    <property type="protein sequence ID" value="ENSMUSP00000026068.8"/>
    <property type="gene ID" value="ENSMUSG00000025082.9"/>
</dbReference>
<dbReference type="GeneID" id="240675"/>
<dbReference type="KEGG" id="mmu:240675"/>
<dbReference type="UCSC" id="uc008hzl.1">
    <molecule id="Q70UZ7-1"/>
    <property type="organism name" value="mouse"/>
</dbReference>
<dbReference type="AGR" id="MGI:2684334"/>
<dbReference type="CTD" id="340706"/>
<dbReference type="MGI" id="MGI:2684334">
    <property type="gene designation" value="Vwa2"/>
</dbReference>
<dbReference type="VEuPathDB" id="HostDB:ENSMUSG00000025082"/>
<dbReference type="eggNOG" id="KOG3544">
    <property type="taxonomic scope" value="Eukaryota"/>
</dbReference>
<dbReference type="GeneTree" id="ENSGT00940000159040"/>
<dbReference type="HOGENOM" id="CLU_008905_7_3_1"/>
<dbReference type="InParanoid" id="Q70UZ7"/>
<dbReference type="OMA" id="MWCSAAM"/>
<dbReference type="OrthoDB" id="6132182at2759"/>
<dbReference type="PhylomeDB" id="Q70UZ7"/>
<dbReference type="TreeFam" id="TF318242"/>
<dbReference type="BioGRID-ORCS" id="240675">
    <property type="hits" value="1 hit in 80 CRISPR screens"/>
</dbReference>
<dbReference type="PRO" id="PR:Q70UZ7"/>
<dbReference type="Proteomes" id="UP000000589">
    <property type="component" value="Chromosome 19"/>
</dbReference>
<dbReference type="RNAct" id="Q70UZ7">
    <property type="molecule type" value="protein"/>
</dbReference>
<dbReference type="Bgee" id="ENSMUSG00000025082">
    <property type="expression patterns" value="Expressed in ear vesicle and 63 other cell types or tissues"/>
</dbReference>
<dbReference type="GO" id="GO:0005604">
    <property type="term" value="C:basement membrane"/>
    <property type="evidence" value="ECO:0000314"/>
    <property type="project" value="MGI"/>
</dbReference>
<dbReference type="GO" id="GO:0005576">
    <property type="term" value="C:extracellular region"/>
    <property type="evidence" value="ECO:0000314"/>
    <property type="project" value="MGI"/>
</dbReference>
<dbReference type="GO" id="GO:0005615">
    <property type="term" value="C:extracellular space"/>
    <property type="evidence" value="ECO:0000314"/>
    <property type="project" value="MGI"/>
</dbReference>
<dbReference type="GO" id="GO:0005509">
    <property type="term" value="F:calcium ion binding"/>
    <property type="evidence" value="ECO:0007669"/>
    <property type="project" value="InterPro"/>
</dbReference>
<dbReference type="GO" id="GO:0042802">
    <property type="term" value="F:identical protein binding"/>
    <property type="evidence" value="ECO:0000314"/>
    <property type="project" value="MGI"/>
</dbReference>
<dbReference type="GO" id="GO:0007161">
    <property type="term" value="P:calcium-independent cell-matrix adhesion"/>
    <property type="evidence" value="ECO:0000314"/>
    <property type="project" value="MGI"/>
</dbReference>
<dbReference type="GO" id="GO:0046626">
    <property type="term" value="P:regulation of insulin receptor signaling pathway"/>
    <property type="evidence" value="ECO:0007669"/>
    <property type="project" value="Ensembl"/>
</dbReference>
<dbReference type="CDD" id="cd00053">
    <property type="entry name" value="EGF"/>
    <property type="match status" value="1"/>
</dbReference>
<dbReference type="CDD" id="cd00054">
    <property type="entry name" value="EGF_CA"/>
    <property type="match status" value="1"/>
</dbReference>
<dbReference type="CDD" id="cd01472">
    <property type="entry name" value="vWA_collagen"/>
    <property type="match status" value="1"/>
</dbReference>
<dbReference type="FunFam" id="2.10.25.10:FF:000066">
    <property type="entry name" value="FAT atypical cadherin 4"/>
    <property type="match status" value="1"/>
</dbReference>
<dbReference type="FunFam" id="2.10.25.10:FF:000336">
    <property type="entry name" value="von Willebrand factor A domain containing 2"/>
    <property type="match status" value="1"/>
</dbReference>
<dbReference type="FunFam" id="3.40.50.410:FF:000047">
    <property type="entry name" value="von Willebrand factor A domain containing 2"/>
    <property type="match status" value="1"/>
</dbReference>
<dbReference type="FunFam" id="3.40.50.410:FF:000054">
    <property type="entry name" value="von Willebrand factor A domain containing 2"/>
    <property type="match status" value="1"/>
</dbReference>
<dbReference type="FunFam" id="3.40.50.410:FF:000058">
    <property type="entry name" value="von Willebrand factor A domain containing 2"/>
    <property type="match status" value="1"/>
</dbReference>
<dbReference type="Gene3D" id="2.10.25.10">
    <property type="entry name" value="Laminin"/>
    <property type="match status" value="2"/>
</dbReference>
<dbReference type="Gene3D" id="3.40.50.410">
    <property type="entry name" value="von Willebrand factor, type A domain"/>
    <property type="match status" value="3"/>
</dbReference>
<dbReference type="InterPro" id="IPR050525">
    <property type="entry name" value="ECM_Assembly_Org"/>
</dbReference>
<dbReference type="InterPro" id="IPR001881">
    <property type="entry name" value="EGF-like_Ca-bd_dom"/>
</dbReference>
<dbReference type="InterPro" id="IPR013032">
    <property type="entry name" value="EGF-like_CS"/>
</dbReference>
<dbReference type="InterPro" id="IPR000742">
    <property type="entry name" value="EGF-like_dom"/>
</dbReference>
<dbReference type="InterPro" id="IPR002035">
    <property type="entry name" value="VWF_A"/>
</dbReference>
<dbReference type="InterPro" id="IPR036465">
    <property type="entry name" value="vWFA_dom_sf"/>
</dbReference>
<dbReference type="PANTHER" id="PTHR24020">
    <property type="entry name" value="COLLAGEN ALPHA"/>
    <property type="match status" value="1"/>
</dbReference>
<dbReference type="PANTHER" id="PTHR24020:SF37">
    <property type="entry name" value="VON WILLEBRAND FACTOR A DOMAIN-CONTAINING PROTEIN 2"/>
    <property type="match status" value="1"/>
</dbReference>
<dbReference type="Pfam" id="PF00008">
    <property type="entry name" value="EGF"/>
    <property type="match status" value="1"/>
</dbReference>
<dbReference type="Pfam" id="PF12661">
    <property type="entry name" value="hEGF"/>
    <property type="match status" value="1"/>
</dbReference>
<dbReference type="Pfam" id="PF00092">
    <property type="entry name" value="VWA"/>
    <property type="match status" value="3"/>
</dbReference>
<dbReference type="PRINTS" id="PR00453">
    <property type="entry name" value="VWFADOMAIN"/>
</dbReference>
<dbReference type="SMART" id="SM00181">
    <property type="entry name" value="EGF"/>
    <property type="match status" value="2"/>
</dbReference>
<dbReference type="SMART" id="SM00179">
    <property type="entry name" value="EGF_CA"/>
    <property type="match status" value="2"/>
</dbReference>
<dbReference type="SMART" id="SM00327">
    <property type="entry name" value="VWA"/>
    <property type="match status" value="3"/>
</dbReference>
<dbReference type="SUPFAM" id="SSF57196">
    <property type="entry name" value="EGF/Laminin"/>
    <property type="match status" value="1"/>
</dbReference>
<dbReference type="SUPFAM" id="SSF53300">
    <property type="entry name" value="vWA-like"/>
    <property type="match status" value="3"/>
</dbReference>
<dbReference type="PROSITE" id="PS00022">
    <property type="entry name" value="EGF_1"/>
    <property type="match status" value="1"/>
</dbReference>
<dbReference type="PROSITE" id="PS01186">
    <property type="entry name" value="EGF_2"/>
    <property type="match status" value="1"/>
</dbReference>
<dbReference type="PROSITE" id="PS50026">
    <property type="entry name" value="EGF_3"/>
    <property type="match status" value="2"/>
</dbReference>
<dbReference type="PROSITE" id="PS50234">
    <property type="entry name" value="VWFA"/>
    <property type="match status" value="3"/>
</dbReference>
<evidence type="ECO:0000255" key="1"/>
<evidence type="ECO:0000255" key="2">
    <source>
        <dbReference type="PROSITE-ProRule" id="PRU00076"/>
    </source>
</evidence>
<evidence type="ECO:0000255" key="3">
    <source>
        <dbReference type="PROSITE-ProRule" id="PRU00219"/>
    </source>
</evidence>
<evidence type="ECO:0000256" key="4">
    <source>
        <dbReference type="SAM" id="MobiDB-lite"/>
    </source>
</evidence>
<evidence type="ECO:0000269" key="5">
    <source>
    </source>
</evidence>
<evidence type="ECO:0000303" key="6">
    <source>
    </source>
</evidence>
<evidence type="ECO:0000305" key="7"/>
<sequence length="791" mass="85639">MPPLLLLPAIYMLLFFRVSPTISLQEVHVNRETMGKIAVASKLMWCSAAVDILFLLDGSHSIGKGSFERSKRFAIAACDALDISPGRVRVGALQFGSTPHLEFPLDSFSTRQEVKESIKGIVFKGGRTETGLALKRLSRGFPGGRNGSVPQILIIVTDGKSQGPVALPAKQLRERGIVVFAVGVRFPRWDELLTLASEPKDRHVLLAEQVEDATNGLLSTLSSSALCTTADPDCRVEPHPCERRTLETVRELAGNALCWRGSRQADTVLALPCPFYSWKRVFQTHPANCYRTICPGPCDSQPCQNGGTCIPEGVDRYHCLCPLAFGGEVNCAPKLSLECRIDVLFLLDSSAGTTLGGFRRAKAFVKRFVQAVLREDSRARVGIASYGRNLMVAVPVGEYQHVPDLIRSLDSIPFSGGPTLTGSALLQVAEHGFGSASRTGQDRPRRVVVLLTESRSQDEVSGPAAHARARELLLLGVGSEILQAELVKITGSPKHVMVHTDPQDLFSQIPELQRRLCSQPRPGCQAQSLDLVFLLDASASVGRENFAQMQSFIRKCTLRFDVNPDVTQVGLVVYGSRVQTAFGLDTHPTRAAVLRAMSQAPYLGGVGSAGTALLHIEDKVMTVQRGARPGVPKAVVMLTGGSGAEDAAVPAQKLRGNGISVLVMSVGAVLREAVRRLAGPRDSLIHVAAYTDLPYHQDMLIEWLCREARLPVNLCKPSPCMNEGTCVLKNGSYRCECRGGWEGPHCENRILRGDAPMARSFHQEPAGLQGPTPSQQAPKHLRIGKALSSAK</sequence>
<feature type="signal peptide" evidence="1">
    <location>
        <begin position="1"/>
        <end position="23"/>
    </location>
</feature>
<feature type="chain" id="PRO_5000070397" description="von Willebrand factor A domain-containing protein 2">
    <location>
        <begin position="24"/>
        <end position="791"/>
    </location>
</feature>
<feature type="domain" description="VWFA 1" evidence="3">
    <location>
        <begin position="51"/>
        <end position="221"/>
    </location>
</feature>
<feature type="domain" description="EGF-like 1" evidence="2">
    <location>
        <begin position="295"/>
        <end position="332"/>
    </location>
</feature>
<feature type="domain" description="VWFA 2" evidence="3">
    <location>
        <begin position="342"/>
        <end position="516"/>
    </location>
</feature>
<feature type="domain" description="VWFA 3" evidence="3">
    <location>
        <begin position="530"/>
        <end position="704"/>
    </location>
</feature>
<feature type="domain" description="EGF-like 2" evidence="2">
    <location>
        <begin position="711"/>
        <end position="747"/>
    </location>
</feature>
<feature type="region of interest" description="Disordered" evidence="4">
    <location>
        <begin position="762"/>
        <end position="791"/>
    </location>
</feature>
<feature type="glycosylation site" description="N-linked (GlcNAc...) asparagine" evidence="1">
    <location>
        <position position="146"/>
    </location>
</feature>
<feature type="disulfide bond" evidence="2">
    <location>
        <begin position="298"/>
        <end position="309"/>
    </location>
</feature>
<feature type="disulfide bond" evidence="2">
    <location>
        <begin position="303"/>
        <end position="319"/>
    </location>
</feature>
<feature type="disulfide bond" evidence="2">
    <location>
        <begin position="321"/>
        <end position="331"/>
    </location>
</feature>
<feature type="disulfide bond" evidence="2">
    <location>
        <begin position="715"/>
        <end position="726"/>
    </location>
</feature>
<feature type="disulfide bond" evidence="2">
    <location>
        <begin position="720"/>
        <end position="735"/>
    </location>
</feature>
<feature type="disulfide bond" evidence="2">
    <location>
        <begin position="737"/>
        <end position="746"/>
    </location>
</feature>
<feature type="splice variant" id="VSP_028740" description="In isoform 2." evidence="6">
    <location>
        <begin position="1"/>
        <end position="218"/>
    </location>
</feature>
<feature type="splice variant" id="VSP_028741" description="In isoform 2." evidence="6">
    <original>STLSSSALCTTADPDCRVEPHPCERRTLETVRELAGNALCWRGSRQADTV</original>
    <variation>MCCWLSKWRMPPMASSAPSAAPHSAPLLIQTAGWNLIPVSGGRWRPSGSS</variation>
    <location>
        <begin position="219"/>
        <end position="268"/>
    </location>
</feature>
<feature type="sequence conflict" description="In Ref. 2; BAE26210." evidence="7" ref="2">
    <original>V</original>
    <variation>A</variation>
    <location>
        <position position="18"/>
    </location>
</feature>
<feature type="sequence conflict" description="In Ref. 2; BAE26210." evidence="7" ref="2">
    <original>V</original>
    <variation>I</variation>
    <location>
        <position position="156"/>
    </location>
</feature>
<feature type="sequence conflict" description="In Ref. 2; BAE26210." evidence="7" ref="2">
    <original>R</original>
    <variation>Q</variation>
    <location>
        <position position="202"/>
    </location>
</feature>
<feature type="sequence conflict" description="In Ref. 2; BAE26210." evidence="7" ref="2">
    <original>A</original>
    <variation>E</variation>
    <location>
        <position position="225"/>
    </location>
</feature>
<feature type="sequence conflict" description="In Ref. 2; BAE26210." evidence="7" ref="2">
    <original>G</original>
    <variation>E</variation>
    <location>
        <position position="356"/>
    </location>
</feature>
<feature type="sequence conflict" description="In Ref. 2; BAE26210." evidence="7" ref="2">
    <original>L</original>
    <variation>V</variation>
    <location>
        <position position="482"/>
    </location>
</feature>
<feature type="sequence conflict" description="In Ref. 2; BAE26210." evidence="7" ref="2">
    <original>V</original>
    <variation>G</variation>
    <location>
        <position position="487"/>
    </location>
</feature>
<feature type="sequence conflict" description="In Ref. 2; BAE26210." evidence="7" ref="2">
    <original>E</original>
    <variation>K</variation>
    <location>
        <position position="511"/>
    </location>
</feature>
<feature type="sequence conflict" description="In Ref. 2; BAE26210." evidence="7" ref="2">
    <original>N</original>
    <variation>D</variation>
    <location>
        <position position="713"/>
    </location>
</feature>
<feature type="sequence conflict" description="In Ref. 3; AAI16637." evidence="7" ref="3">
    <original>N</original>
    <variation>I</variation>
    <location>
        <position position="730"/>
    </location>
</feature>
<gene>
    <name type="primary">Vwa2</name>
    <name type="synonym">Amaco</name>
</gene>
<comment type="subunit">
    <text evidence="5">Forms monomers and multimers.</text>
</comment>
<comment type="subcellular location">
    <subcellularLocation>
        <location>Secreted</location>
    </subcellularLocation>
</comment>
<comment type="alternative products">
    <event type="alternative splicing"/>
    <isoform>
        <id>Q70UZ7-1</id>
        <name>1</name>
        <sequence type="displayed"/>
    </isoform>
    <isoform>
        <id>Q70UZ7-2</id>
        <name>2</name>
        <sequence type="described" ref="VSP_028740 VSP_028741"/>
    </isoform>
</comment>
<comment type="tissue specificity">
    <text evidence="5">Detected in uterus, kidney, and skin. Also detected in intestine and lung of adult mice, and in calvaria, femur, brain, heart, intestine, skeletal muscle, and lung of newborn mice.</text>
</comment>
<comment type="developmental stage">
    <text evidence="5">First detected at days 7.5-8 dpc, when it is weakly expressed around the developing mesodermal cells. At day 10.5 dpc it is detected in the heart and the condensing somites, and at day 14.5 dpc it is present in the choroid plexus, the cochlea, the terminal bronchii of the lung, the heart, the skin, and in the cartilage primordium of the developing skeleton as well as in the interdigital spaces. Strong staining is seen in the condensed mesenchyme forming the edge of the developing teeth budding into the branchial arch and coinciding with the basement membrane that underlies the stratified squamous epithelia in the oral cavity.</text>
</comment>
<accession>Q70UZ7</accession>
<accession>Q14AY2</accession>
<accession>Q14BI0</accession>
<accession>Q3UM88</accession>
<protein>
    <recommendedName>
        <fullName>von Willebrand factor A domain-containing protein 2</fullName>
    </recommendedName>
    <alternativeName>
        <fullName>A domain-containing protein similar to matrilin and collagen</fullName>
        <shortName>AMACO</shortName>
    </alternativeName>
</protein>
<proteinExistence type="evidence at protein level"/>
<reference key="1">
    <citation type="journal article" date="2003" name="J. Biol. Chem.">
        <title>Identification and characterization of AMACO, a new member of the von Willebrand factor A-like domain protein superfamily with a regulated expression in the kidney.</title>
        <authorList>
            <person name="Sengle G."/>
            <person name="Kobbe B."/>
            <person name="Moergelin M."/>
            <person name="Paulsson M."/>
            <person name="Wagener R."/>
        </authorList>
    </citation>
    <scope>NUCLEOTIDE SEQUENCE [MRNA] (ISOFORM 1)</scope>
    <scope>ALTERNATIVE SPLICING</scope>
    <scope>DEVELOPMENTAL STAGE</scope>
    <scope>TISSUE SPECIFICITY</scope>
    <scope>SUBUNIT</scope>
    <source>
        <strain>C57BL/6J</strain>
        <tissue>Epiphyseal cartilage</tissue>
    </source>
</reference>
<reference key="2">
    <citation type="journal article" date="2005" name="Science">
        <title>The transcriptional landscape of the mammalian genome.</title>
        <authorList>
            <person name="Carninci P."/>
            <person name="Kasukawa T."/>
            <person name="Katayama S."/>
            <person name="Gough J."/>
            <person name="Frith M.C."/>
            <person name="Maeda N."/>
            <person name="Oyama R."/>
            <person name="Ravasi T."/>
            <person name="Lenhard B."/>
            <person name="Wells C."/>
            <person name="Kodzius R."/>
            <person name="Shimokawa K."/>
            <person name="Bajic V.B."/>
            <person name="Brenner S.E."/>
            <person name="Batalov S."/>
            <person name="Forrest A.R."/>
            <person name="Zavolan M."/>
            <person name="Davis M.J."/>
            <person name="Wilming L.G."/>
            <person name="Aidinis V."/>
            <person name="Allen J.E."/>
            <person name="Ambesi-Impiombato A."/>
            <person name="Apweiler R."/>
            <person name="Aturaliya R.N."/>
            <person name="Bailey T.L."/>
            <person name="Bansal M."/>
            <person name="Baxter L."/>
            <person name="Beisel K.W."/>
            <person name="Bersano T."/>
            <person name="Bono H."/>
            <person name="Chalk A.M."/>
            <person name="Chiu K.P."/>
            <person name="Choudhary V."/>
            <person name="Christoffels A."/>
            <person name="Clutterbuck D.R."/>
            <person name="Crowe M.L."/>
            <person name="Dalla E."/>
            <person name="Dalrymple B.P."/>
            <person name="de Bono B."/>
            <person name="Della Gatta G."/>
            <person name="di Bernardo D."/>
            <person name="Down T."/>
            <person name="Engstrom P."/>
            <person name="Fagiolini M."/>
            <person name="Faulkner G."/>
            <person name="Fletcher C.F."/>
            <person name="Fukushima T."/>
            <person name="Furuno M."/>
            <person name="Futaki S."/>
            <person name="Gariboldi M."/>
            <person name="Georgii-Hemming P."/>
            <person name="Gingeras T.R."/>
            <person name="Gojobori T."/>
            <person name="Green R.E."/>
            <person name="Gustincich S."/>
            <person name="Harbers M."/>
            <person name="Hayashi Y."/>
            <person name="Hensch T.K."/>
            <person name="Hirokawa N."/>
            <person name="Hill D."/>
            <person name="Huminiecki L."/>
            <person name="Iacono M."/>
            <person name="Ikeo K."/>
            <person name="Iwama A."/>
            <person name="Ishikawa T."/>
            <person name="Jakt M."/>
            <person name="Kanapin A."/>
            <person name="Katoh M."/>
            <person name="Kawasawa Y."/>
            <person name="Kelso J."/>
            <person name="Kitamura H."/>
            <person name="Kitano H."/>
            <person name="Kollias G."/>
            <person name="Krishnan S.P."/>
            <person name="Kruger A."/>
            <person name="Kummerfeld S.K."/>
            <person name="Kurochkin I.V."/>
            <person name="Lareau L.F."/>
            <person name="Lazarevic D."/>
            <person name="Lipovich L."/>
            <person name="Liu J."/>
            <person name="Liuni S."/>
            <person name="McWilliam S."/>
            <person name="Madan Babu M."/>
            <person name="Madera M."/>
            <person name="Marchionni L."/>
            <person name="Matsuda H."/>
            <person name="Matsuzawa S."/>
            <person name="Miki H."/>
            <person name="Mignone F."/>
            <person name="Miyake S."/>
            <person name="Morris K."/>
            <person name="Mottagui-Tabar S."/>
            <person name="Mulder N."/>
            <person name="Nakano N."/>
            <person name="Nakauchi H."/>
            <person name="Ng P."/>
            <person name="Nilsson R."/>
            <person name="Nishiguchi S."/>
            <person name="Nishikawa S."/>
            <person name="Nori F."/>
            <person name="Ohara O."/>
            <person name="Okazaki Y."/>
            <person name="Orlando V."/>
            <person name="Pang K.C."/>
            <person name="Pavan W.J."/>
            <person name="Pavesi G."/>
            <person name="Pesole G."/>
            <person name="Petrovsky N."/>
            <person name="Piazza S."/>
            <person name="Reed J."/>
            <person name="Reid J.F."/>
            <person name="Ring B.Z."/>
            <person name="Ringwald M."/>
            <person name="Rost B."/>
            <person name="Ruan Y."/>
            <person name="Salzberg S.L."/>
            <person name="Sandelin A."/>
            <person name="Schneider C."/>
            <person name="Schoenbach C."/>
            <person name="Sekiguchi K."/>
            <person name="Semple C.A."/>
            <person name="Seno S."/>
            <person name="Sessa L."/>
            <person name="Sheng Y."/>
            <person name="Shibata Y."/>
            <person name="Shimada H."/>
            <person name="Shimada K."/>
            <person name="Silva D."/>
            <person name="Sinclair B."/>
            <person name="Sperling S."/>
            <person name="Stupka E."/>
            <person name="Sugiura K."/>
            <person name="Sultana R."/>
            <person name="Takenaka Y."/>
            <person name="Taki K."/>
            <person name="Tammoja K."/>
            <person name="Tan S.L."/>
            <person name="Tang S."/>
            <person name="Taylor M.S."/>
            <person name="Tegner J."/>
            <person name="Teichmann S.A."/>
            <person name="Ueda H.R."/>
            <person name="van Nimwegen E."/>
            <person name="Verardo R."/>
            <person name="Wei C.L."/>
            <person name="Yagi K."/>
            <person name="Yamanishi H."/>
            <person name="Zabarovsky E."/>
            <person name="Zhu S."/>
            <person name="Zimmer A."/>
            <person name="Hide W."/>
            <person name="Bult C."/>
            <person name="Grimmond S.M."/>
            <person name="Teasdale R.D."/>
            <person name="Liu E.T."/>
            <person name="Brusic V."/>
            <person name="Quackenbush J."/>
            <person name="Wahlestedt C."/>
            <person name="Mattick J.S."/>
            <person name="Hume D.A."/>
            <person name="Kai C."/>
            <person name="Sasaki D."/>
            <person name="Tomaru Y."/>
            <person name="Fukuda S."/>
            <person name="Kanamori-Katayama M."/>
            <person name="Suzuki M."/>
            <person name="Aoki J."/>
            <person name="Arakawa T."/>
            <person name="Iida J."/>
            <person name="Imamura K."/>
            <person name="Itoh M."/>
            <person name="Kato T."/>
            <person name="Kawaji H."/>
            <person name="Kawagashira N."/>
            <person name="Kawashima T."/>
            <person name="Kojima M."/>
            <person name="Kondo S."/>
            <person name="Konno H."/>
            <person name="Nakano K."/>
            <person name="Ninomiya N."/>
            <person name="Nishio T."/>
            <person name="Okada M."/>
            <person name="Plessy C."/>
            <person name="Shibata K."/>
            <person name="Shiraki T."/>
            <person name="Suzuki S."/>
            <person name="Tagami M."/>
            <person name="Waki K."/>
            <person name="Watahiki A."/>
            <person name="Okamura-Oho Y."/>
            <person name="Suzuki H."/>
            <person name="Kawai J."/>
            <person name="Hayashizaki Y."/>
        </authorList>
    </citation>
    <scope>NUCLEOTIDE SEQUENCE [LARGE SCALE MRNA] (ISOFORM 1)</scope>
    <source>
        <strain>C57BL/6J</strain>
        <tissue>Mammary gland</tissue>
        <tissue>Ovary</tissue>
        <tissue>Uterus</tissue>
    </source>
</reference>
<reference key="3">
    <citation type="journal article" date="2004" name="Genome Res.">
        <title>The status, quality, and expansion of the NIH full-length cDNA project: the Mammalian Gene Collection (MGC).</title>
        <authorList>
            <consortium name="The MGC Project Team"/>
        </authorList>
    </citation>
    <scope>NUCLEOTIDE SEQUENCE [LARGE SCALE MRNA] (ISOFORMS 1 AND 2)</scope>
</reference>
<keyword id="KW-0025">Alternative splicing</keyword>
<keyword id="KW-1015">Disulfide bond</keyword>
<keyword id="KW-0245">EGF-like domain</keyword>
<keyword id="KW-0325">Glycoprotein</keyword>
<keyword id="KW-1185">Reference proteome</keyword>
<keyword id="KW-0677">Repeat</keyword>
<keyword id="KW-0964">Secreted</keyword>
<keyword id="KW-0732">Signal</keyword>